<name>LACD_STAAM</name>
<reference key="1">
    <citation type="journal article" date="2001" name="Lancet">
        <title>Whole genome sequencing of meticillin-resistant Staphylococcus aureus.</title>
        <authorList>
            <person name="Kuroda M."/>
            <person name="Ohta T."/>
            <person name="Uchiyama I."/>
            <person name="Baba T."/>
            <person name="Yuzawa H."/>
            <person name="Kobayashi I."/>
            <person name="Cui L."/>
            <person name="Oguchi A."/>
            <person name="Aoki K."/>
            <person name="Nagai Y."/>
            <person name="Lian J.-Q."/>
            <person name="Ito T."/>
            <person name="Kanamori M."/>
            <person name="Matsumaru H."/>
            <person name="Maruyama A."/>
            <person name="Murakami H."/>
            <person name="Hosoyama A."/>
            <person name="Mizutani-Ui Y."/>
            <person name="Takahashi N.K."/>
            <person name="Sawano T."/>
            <person name="Inoue R."/>
            <person name="Kaito C."/>
            <person name="Sekimizu K."/>
            <person name="Hirakawa H."/>
            <person name="Kuhara S."/>
            <person name="Goto S."/>
            <person name="Yabuzaki J."/>
            <person name="Kanehisa M."/>
            <person name="Yamashita A."/>
            <person name="Oshima K."/>
            <person name="Furuya K."/>
            <person name="Yoshino C."/>
            <person name="Shiba T."/>
            <person name="Hattori M."/>
            <person name="Ogasawara N."/>
            <person name="Hayashi H."/>
            <person name="Hiramatsu K."/>
        </authorList>
    </citation>
    <scope>NUCLEOTIDE SEQUENCE [LARGE SCALE GENOMIC DNA]</scope>
    <source>
        <strain>Mu50 / ATCC 700699</strain>
    </source>
</reference>
<dbReference type="EC" id="4.1.2.40"/>
<dbReference type="EMBL" id="BA000017">
    <property type="protein sequence ID" value="BAB58354.1"/>
    <property type="molecule type" value="Genomic_DNA"/>
</dbReference>
<dbReference type="RefSeq" id="WP_000047009.1">
    <property type="nucleotide sequence ID" value="NC_002758.2"/>
</dbReference>
<dbReference type="PDB" id="3KAO">
    <property type="method" value="X-ray"/>
    <property type="resolution" value="1.90 A"/>
    <property type="chains" value="A=1-326"/>
</dbReference>
<dbReference type="PDBsum" id="3KAO"/>
<dbReference type="SMR" id="P0A009"/>
<dbReference type="KEGG" id="sav:SAV2192"/>
<dbReference type="HOGENOM" id="CLU_058971_0_1_9"/>
<dbReference type="PhylomeDB" id="P0A009"/>
<dbReference type="UniPathway" id="UPA00704">
    <property type="reaction ID" value="UER00716"/>
</dbReference>
<dbReference type="EvolutionaryTrace" id="P0A009"/>
<dbReference type="Proteomes" id="UP000002481">
    <property type="component" value="Chromosome"/>
</dbReference>
<dbReference type="GO" id="GO:0061595">
    <property type="term" value="F:6-deoxy-6-sulfofructose-1-phosphate aldolase activity"/>
    <property type="evidence" value="ECO:0007669"/>
    <property type="project" value="TreeGrafter"/>
</dbReference>
<dbReference type="GO" id="GO:0009024">
    <property type="term" value="F:tagatose-6-phosphate kinase activity"/>
    <property type="evidence" value="ECO:0007669"/>
    <property type="project" value="InterPro"/>
</dbReference>
<dbReference type="GO" id="GO:0009025">
    <property type="term" value="F:tagatose-bisphosphate aldolase activity"/>
    <property type="evidence" value="ECO:0007669"/>
    <property type="project" value="UniProtKB-UniRule"/>
</dbReference>
<dbReference type="GO" id="GO:1902777">
    <property type="term" value="P:6-sulfoquinovose(1-) catabolic process"/>
    <property type="evidence" value="ECO:0007669"/>
    <property type="project" value="TreeGrafter"/>
</dbReference>
<dbReference type="GO" id="GO:2001059">
    <property type="term" value="P:D-tagatose 6-phosphate catabolic process"/>
    <property type="evidence" value="ECO:0007669"/>
    <property type="project" value="UniProtKB-UniRule"/>
</dbReference>
<dbReference type="GO" id="GO:0019512">
    <property type="term" value="P:lactose catabolic process via tagatose-6-phosphate"/>
    <property type="evidence" value="ECO:0007669"/>
    <property type="project" value="InterPro"/>
</dbReference>
<dbReference type="FunFam" id="3.20.20.70:FF:000137">
    <property type="entry name" value="Tagatose 1,6-diphosphate aldolase 2"/>
    <property type="match status" value="1"/>
</dbReference>
<dbReference type="Gene3D" id="3.20.20.70">
    <property type="entry name" value="Aldolase class I"/>
    <property type="match status" value="1"/>
</dbReference>
<dbReference type="HAMAP" id="MF_00734">
    <property type="entry name" value="LacD"/>
    <property type="match status" value="1"/>
</dbReference>
<dbReference type="InterPro" id="IPR013785">
    <property type="entry name" value="Aldolase_TIM"/>
</dbReference>
<dbReference type="InterPro" id="IPR002915">
    <property type="entry name" value="DeoC/FbaB/LacD_aldolase"/>
</dbReference>
<dbReference type="InterPro" id="IPR050552">
    <property type="entry name" value="LacD_aldolase"/>
</dbReference>
<dbReference type="InterPro" id="IPR005927">
    <property type="entry name" value="Tag_1.6-dipho_adolase"/>
</dbReference>
<dbReference type="NCBIfam" id="TIGR01232">
    <property type="entry name" value="lacD"/>
    <property type="match status" value="1"/>
</dbReference>
<dbReference type="NCBIfam" id="NF003180">
    <property type="entry name" value="PRK04161.1"/>
    <property type="match status" value="1"/>
</dbReference>
<dbReference type="NCBIfam" id="NF009065">
    <property type="entry name" value="PRK12399.1"/>
    <property type="match status" value="1"/>
</dbReference>
<dbReference type="NCBIfam" id="NF009498">
    <property type="entry name" value="PRK12858.1"/>
    <property type="match status" value="1"/>
</dbReference>
<dbReference type="PANTHER" id="PTHR39340">
    <property type="entry name" value="SULFOFRUCTOSEPHOSPHATE ALDOLASE"/>
    <property type="match status" value="1"/>
</dbReference>
<dbReference type="PANTHER" id="PTHR39340:SF1">
    <property type="entry name" value="SULFOFRUCTOSEPHOSPHATE ALDOLASE"/>
    <property type="match status" value="1"/>
</dbReference>
<dbReference type="Pfam" id="PF01791">
    <property type="entry name" value="DeoC"/>
    <property type="match status" value="1"/>
</dbReference>
<dbReference type="SMART" id="SM01133">
    <property type="entry name" value="DeoC"/>
    <property type="match status" value="1"/>
</dbReference>
<dbReference type="SUPFAM" id="SSF51569">
    <property type="entry name" value="Aldolase"/>
    <property type="match status" value="1"/>
</dbReference>
<feature type="chain" id="PRO_0000203945" description="Tagatose 1,6-diphosphate aldolase">
    <location>
        <begin position="1"/>
        <end position="326"/>
    </location>
</feature>
<feature type="helix" evidence="2">
    <location>
        <begin position="5"/>
        <end position="14"/>
    </location>
</feature>
<feature type="strand" evidence="2">
    <location>
        <begin position="21"/>
        <end position="26"/>
    </location>
</feature>
<feature type="helix" evidence="2">
    <location>
        <begin position="30"/>
        <end position="37"/>
    </location>
</feature>
<feature type="helix" evidence="2">
    <location>
        <begin position="46"/>
        <end position="60"/>
    </location>
</feature>
<feature type="helix" evidence="2">
    <location>
        <begin position="61"/>
        <end position="63"/>
    </location>
</feature>
<feature type="strand" evidence="2">
    <location>
        <begin position="65"/>
        <end position="69"/>
    </location>
</feature>
<feature type="turn" evidence="2">
    <location>
        <begin position="71"/>
        <end position="73"/>
    </location>
</feature>
<feature type="helix" evidence="2">
    <location>
        <begin position="75"/>
        <end position="79"/>
    </location>
</feature>
<feature type="strand" evidence="2">
    <location>
        <begin position="86"/>
        <end position="90"/>
    </location>
</feature>
<feature type="helix" evidence="2">
    <location>
        <begin position="113"/>
        <end position="118"/>
    </location>
</feature>
<feature type="strand" evidence="2">
    <location>
        <begin position="122"/>
        <end position="130"/>
    </location>
</feature>
<feature type="helix" evidence="2">
    <location>
        <begin position="136"/>
        <end position="156"/>
    </location>
</feature>
<feature type="strand" evidence="2">
    <location>
        <begin position="160"/>
        <end position="166"/>
    </location>
</feature>
<feature type="helix" evidence="2">
    <location>
        <begin position="177"/>
        <end position="194"/>
    </location>
</feature>
<feature type="helix" evidence="2">
    <location>
        <begin position="197"/>
        <end position="199"/>
    </location>
</feature>
<feature type="strand" evidence="2">
    <location>
        <begin position="202"/>
        <end position="206"/>
    </location>
</feature>
<feature type="helix" evidence="2">
    <location>
        <begin position="212"/>
        <end position="214"/>
    </location>
</feature>
<feature type="turn" evidence="2">
    <location>
        <begin position="216"/>
        <end position="218"/>
    </location>
</feature>
<feature type="helix" evidence="2">
    <location>
        <begin position="227"/>
        <end position="239"/>
    </location>
</feature>
<feature type="strand" evidence="2">
    <location>
        <begin position="245"/>
        <end position="248"/>
    </location>
</feature>
<feature type="helix" evidence="2">
    <location>
        <begin position="254"/>
        <end position="267"/>
    </location>
</feature>
<feature type="strand" evidence="2">
    <location>
        <begin position="273"/>
        <end position="276"/>
    </location>
</feature>
<feature type="helix" evidence="2">
    <location>
        <begin position="278"/>
        <end position="281"/>
    </location>
</feature>
<feature type="helix" evidence="2">
    <location>
        <begin position="284"/>
        <end position="290"/>
    </location>
</feature>
<feature type="helix" evidence="2">
    <location>
        <begin position="293"/>
        <end position="301"/>
    </location>
</feature>
<feature type="helix" evidence="2">
    <location>
        <begin position="303"/>
        <end position="318"/>
    </location>
</feature>
<proteinExistence type="evidence at protein level"/>
<organism>
    <name type="scientific">Staphylococcus aureus (strain Mu50 / ATCC 700699)</name>
    <dbReference type="NCBI Taxonomy" id="158878"/>
    <lineage>
        <taxon>Bacteria</taxon>
        <taxon>Bacillati</taxon>
        <taxon>Bacillota</taxon>
        <taxon>Bacilli</taxon>
        <taxon>Bacillales</taxon>
        <taxon>Staphylococcaceae</taxon>
        <taxon>Staphylococcus</taxon>
    </lineage>
</organism>
<accession>P0A009</accession>
<accession>P11100</accession>
<comment type="catalytic activity">
    <reaction>
        <text>D-tagatofuranose 1,6-bisphosphate = D-glyceraldehyde 3-phosphate + dihydroxyacetone phosphate</text>
        <dbReference type="Rhea" id="RHEA:22948"/>
        <dbReference type="ChEBI" id="CHEBI:57642"/>
        <dbReference type="ChEBI" id="CHEBI:58694"/>
        <dbReference type="ChEBI" id="CHEBI:59776"/>
        <dbReference type="EC" id="4.1.2.40"/>
    </reaction>
</comment>
<comment type="pathway">
    <text>Carbohydrate metabolism; D-tagatose 6-phosphate degradation; D-glyceraldehyde 3-phosphate and glycerone phosphate from D-tagatose 6-phosphate: step 2/2.</text>
</comment>
<comment type="similarity">
    <text evidence="1">Belongs to the aldolase LacD family.</text>
</comment>
<sequence>MSKSNQKIASIEQLSNNEGIISALAFDQRGALKRMMAKHQTEEPTVAQIEQLKVLVAEELTQYASSILLDPEYGLPASDARNKDCGLLLAYEKTGYDVNAKGRLPDCLVEWSAKRLKEQGANAVKFLLYYDVDDAEEINIQKKAYIERIGSECVAEDIPFFLEVLTYDDNIPDNGSVEFAKVKPRKVNEAMKLFSEPRFNVDVLKVEVPVNMKYVEGFAEGEVVYTKEEAAQHFKDQDAATHLPYIYLSAGVSAELFQETLKFAHEAGAKFNGVLCGRATWSGAVQVYIEQGEDAAREWLRTTGFKNIDDLNKVLKDTATSWKQRK</sequence>
<keyword id="KW-0002">3D-structure</keyword>
<keyword id="KW-0423">Lactose metabolism</keyword>
<keyword id="KW-0456">Lyase</keyword>
<gene>
    <name type="primary">lacD</name>
    <name type="ordered locus">SAV2192</name>
</gene>
<protein>
    <recommendedName>
        <fullName>Tagatose 1,6-diphosphate aldolase</fullName>
        <ecNumber>4.1.2.40</ecNumber>
    </recommendedName>
    <alternativeName>
        <fullName>D-tagatose-1,6-bisphosphate aldolase</fullName>
    </alternativeName>
    <alternativeName>
        <fullName>Tagatose-bisphosphate aldolase</fullName>
    </alternativeName>
</protein>
<evidence type="ECO:0000305" key="1"/>
<evidence type="ECO:0007829" key="2">
    <source>
        <dbReference type="PDB" id="3KAO"/>
    </source>
</evidence>